<name>PSB_METS3</name>
<sequence>MDDKILEGTTTVGITCKDGVVFASERRASMGNLVAHKVAEKIFKINDHIVTTIAGSVGDAQNLMKIIEAEVSLYQMRNNDKISVKAAASVTANILRSGPMYVQTLLGGMDGDKPSLYSLDPAGGMIEDTYISTGSGSIVAYGVLEDRYHEEITTDEGLEIAVRAIKAASERDTFSGNGYLVAKVTKDGFEMLDKEKVNDIVAKI</sequence>
<reference key="1">
    <citation type="journal article" date="2007" name="Proc. Natl. Acad. Sci. U.S.A.">
        <title>Genomic and metabolic adaptations of Methanobrevibacter smithii to the human gut.</title>
        <authorList>
            <person name="Samuel B.S."/>
            <person name="Hansen E.E."/>
            <person name="Manchester J.K."/>
            <person name="Coutinho P.M."/>
            <person name="Henrissat B."/>
            <person name="Fulton R."/>
            <person name="Latreille P."/>
            <person name="Kim K."/>
            <person name="Wilson R.K."/>
            <person name="Gordon J.I."/>
        </authorList>
    </citation>
    <scope>NUCLEOTIDE SEQUENCE [LARGE SCALE GENOMIC DNA]</scope>
    <source>
        <strain>ATCC 35061 / DSM 861 / OCM 144 / PS</strain>
    </source>
</reference>
<keyword id="KW-0068">Autocatalytic cleavage</keyword>
<keyword id="KW-0963">Cytoplasm</keyword>
<keyword id="KW-0378">Hydrolase</keyword>
<keyword id="KW-0645">Protease</keyword>
<keyword id="KW-0647">Proteasome</keyword>
<keyword id="KW-0888">Threonine protease</keyword>
<keyword id="KW-0865">Zymogen</keyword>
<gene>
    <name evidence="1" type="primary">psmB</name>
    <name type="ordered locus">Msm_1037</name>
</gene>
<evidence type="ECO:0000255" key="1">
    <source>
        <dbReference type="HAMAP-Rule" id="MF_02113"/>
    </source>
</evidence>
<feature type="propeptide" id="PRO_0000397332" description="Removed in mature form; by autocatalysis" evidence="1">
    <location>
        <begin position="1"/>
        <end position="8"/>
    </location>
</feature>
<feature type="chain" id="PRO_0000397333" description="Proteasome subunit beta">
    <location>
        <begin position="9"/>
        <end position="204"/>
    </location>
</feature>
<feature type="active site" description="Nucleophile" evidence="1">
    <location>
        <position position="9"/>
    </location>
</feature>
<organism>
    <name type="scientific">Methanobrevibacter smithii (strain ATCC 35061 / DSM 861 / OCM 144 / PS)</name>
    <dbReference type="NCBI Taxonomy" id="420247"/>
    <lineage>
        <taxon>Archaea</taxon>
        <taxon>Methanobacteriati</taxon>
        <taxon>Methanobacteriota</taxon>
        <taxon>Methanomada group</taxon>
        <taxon>Methanobacteria</taxon>
        <taxon>Methanobacteriales</taxon>
        <taxon>Methanobacteriaceae</taxon>
        <taxon>Methanobrevibacter</taxon>
    </lineage>
</organism>
<proteinExistence type="inferred from homology"/>
<comment type="function">
    <text evidence="1">Component of the proteasome core, a large protease complex with broad specificity involved in protein degradation.</text>
</comment>
<comment type="catalytic activity">
    <reaction evidence="1">
        <text>Cleavage of peptide bonds with very broad specificity.</text>
        <dbReference type="EC" id="3.4.25.1"/>
    </reaction>
</comment>
<comment type="activity regulation">
    <text evidence="1">The formation of the proteasomal ATPase PAN-20S proteasome complex, via the docking of the C-termini of PAN into the intersubunit pockets in the alpha-rings, triggers opening of the gate for substrate entry. Interconversion between the open-gate and close-gate conformations leads to a dynamic regulation of the 20S proteasome proteolysis activity.</text>
</comment>
<comment type="subunit">
    <text evidence="1">The 20S proteasome core is composed of 14 alpha and 14 beta subunits that assemble into four stacked heptameric rings, resulting in a barrel-shaped structure. The two inner rings, each composed of seven catalytic beta subunits, are sandwiched by two outer rings, each composed of seven alpha subunits. The catalytic chamber with the active sites is on the inside of the barrel. Has a gated structure, the ends of the cylinder being occluded by the N-termini of the alpha-subunits. Is capped at one or both ends by the proteasome regulatory ATPase, PAN.</text>
</comment>
<comment type="subcellular location">
    <subcellularLocation>
        <location evidence="1">Cytoplasm</location>
    </subcellularLocation>
</comment>
<comment type="similarity">
    <text evidence="1">Belongs to the peptidase T1B family.</text>
</comment>
<dbReference type="EC" id="3.4.25.1" evidence="1"/>
<dbReference type="EMBL" id="CP000678">
    <property type="protein sequence ID" value="ABQ87242.1"/>
    <property type="molecule type" value="Genomic_DNA"/>
</dbReference>
<dbReference type="RefSeq" id="WP_011954251.1">
    <property type="nucleotide sequence ID" value="NZ_CP117965.1"/>
</dbReference>
<dbReference type="SMR" id="A5UM14"/>
<dbReference type="STRING" id="420247.Msm_1037"/>
<dbReference type="MEROPS" id="T01.002"/>
<dbReference type="EnsemblBacteria" id="ABQ87242">
    <property type="protein sequence ID" value="ABQ87242"/>
    <property type="gene ID" value="Msm_1037"/>
</dbReference>
<dbReference type="GeneID" id="78817677"/>
<dbReference type="KEGG" id="msi:Msm_1037"/>
<dbReference type="PATRIC" id="fig|420247.28.peg.1035"/>
<dbReference type="eggNOG" id="arCOG00970">
    <property type="taxonomic scope" value="Archaea"/>
</dbReference>
<dbReference type="HOGENOM" id="CLU_035750_7_2_2"/>
<dbReference type="Proteomes" id="UP000001992">
    <property type="component" value="Chromosome"/>
</dbReference>
<dbReference type="GO" id="GO:0005737">
    <property type="term" value="C:cytoplasm"/>
    <property type="evidence" value="ECO:0007669"/>
    <property type="project" value="UniProtKB-SubCell"/>
</dbReference>
<dbReference type="GO" id="GO:0019774">
    <property type="term" value="C:proteasome core complex, beta-subunit complex"/>
    <property type="evidence" value="ECO:0007669"/>
    <property type="project" value="UniProtKB-UniRule"/>
</dbReference>
<dbReference type="GO" id="GO:0004298">
    <property type="term" value="F:threonine-type endopeptidase activity"/>
    <property type="evidence" value="ECO:0007669"/>
    <property type="project" value="UniProtKB-UniRule"/>
</dbReference>
<dbReference type="GO" id="GO:0010498">
    <property type="term" value="P:proteasomal protein catabolic process"/>
    <property type="evidence" value="ECO:0007669"/>
    <property type="project" value="UniProtKB-UniRule"/>
</dbReference>
<dbReference type="FunFam" id="3.60.20.10:FF:000049">
    <property type="entry name" value="Proteasome subunit beta"/>
    <property type="match status" value="1"/>
</dbReference>
<dbReference type="Gene3D" id="3.60.20.10">
    <property type="entry name" value="Glutamine Phosphoribosylpyrophosphate, subunit 1, domain 1"/>
    <property type="match status" value="1"/>
</dbReference>
<dbReference type="HAMAP" id="MF_02113_A">
    <property type="entry name" value="Proteasome_B_A"/>
    <property type="match status" value="1"/>
</dbReference>
<dbReference type="InterPro" id="IPR029055">
    <property type="entry name" value="Ntn_hydrolases_N"/>
</dbReference>
<dbReference type="InterPro" id="IPR019983">
    <property type="entry name" value="Pept_T1A_Psome_bsu_arc"/>
</dbReference>
<dbReference type="InterPro" id="IPR000243">
    <property type="entry name" value="Pept_T1A_subB"/>
</dbReference>
<dbReference type="InterPro" id="IPR016050">
    <property type="entry name" value="Proteasome_bsu_CS"/>
</dbReference>
<dbReference type="InterPro" id="IPR001353">
    <property type="entry name" value="Proteasome_sua/b"/>
</dbReference>
<dbReference type="InterPro" id="IPR023333">
    <property type="entry name" value="Proteasome_suB-type"/>
</dbReference>
<dbReference type="NCBIfam" id="TIGR03634">
    <property type="entry name" value="arc_protsome_B"/>
    <property type="match status" value="1"/>
</dbReference>
<dbReference type="PANTHER" id="PTHR32194:SF0">
    <property type="entry name" value="ATP-DEPENDENT PROTEASE SUBUNIT HSLV"/>
    <property type="match status" value="1"/>
</dbReference>
<dbReference type="PANTHER" id="PTHR32194">
    <property type="entry name" value="METALLOPROTEASE TLDD"/>
    <property type="match status" value="1"/>
</dbReference>
<dbReference type="Pfam" id="PF00227">
    <property type="entry name" value="Proteasome"/>
    <property type="match status" value="1"/>
</dbReference>
<dbReference type="PRINTS" id="PR00141">
    <property type="entry name" value="PROTEASOME"/>
</dbReference>
<dbReference type="SUPFAM" id="SSF56235">
    <property type="entry name" value="N-terminal nucleophile aminohydrolases (Ntn hydrolases)"/>
    <property type="match status" value="1"/>
</dbReference>
<dbReference type="PROSITE" id="PS00854">
    <property type="entry name" value="PROTEASOME_BETA_1"/>
    <property type="match status" value="1"/>
</dbReference>
<dbReference type="PROSITE" id="PS51476">
    <property type="entry name" value="PROTEASOME_BETA_2"/>
    <property type="match status" value="1"/>
</dbReference>
<accession>A5UM14</accession>
<protein>
    <recommendedName>
        <fullName evidence="1">Proteasome subunit beta</fullName>
        <ecNumber evidence="1">3.4.25.1</ecNumber>
    </recommendedName>
    <alternativeName>
        <fullName evidence="1">20S proteasome beta subunit</fullName>
    </alternativeName>
    <alternativeName>
        <fullName evidence="1">Proteasome core protein PsmB</fullName>
    </alternativeName>
</protein>